<keyword id="KW-0067">ATP-binding</keyword>
<keyword id="KW-0963">Cytoplasm</keyword>
<keyword id="KW-0227">DNA damage</keyword>
<keyword id="KW-0228">DNA excision</keyword>
<keyword id="KW-0234">DNA repair</keyword>
<keyword id="KW-0267">Excision nuclease</keyword>
<keyword id="KW-0547">Nucleotide-binding</keyword>
<keyword id="KW-0742">SOS response</keyword>
<accession>Q47QN5</accession>
<feature type="chain" id="PRO_0000227377" description="UvrABC system protein B">
    <location>
        <begin position="1"/>
        <end position="701"/>
    </location>
</feature>
<feature type="domain" description="Helicase ATP-binding" evidence="1">
    <location>
        <begin position="35"/>
        <end position="422"/>
    </location>
</feature>
<feature type="domain" description="Helicase C-terminal" evidence="1">
    <location>
        <begin position="439"/>
        <end position="605"/>
    </location>
</feature>
<feature type="domain" description="UVR" evidence="1">
    <location>
        <begin position="656"/>
        <end position="691"/>
    </location>
</feature>
<feature type="region of interest" description="Disordered" evidence="2">
    <location>
        <begin position="620"/>
        <end position="648"/>
    </location>
</feature>
<feature type="short sequence motif" description="Beta-hairpin">
    <location>
        <begin position="101"/>
        <end position="124"/>
    </location>
</feature>
<feature type="binding site" evidence="1">
    <location>
        <begin position="48"/>
        <end position="55"/>
    </location>
    <ligand>
        <name>ATP</name>
        <dbReference type="ChEBI" id="CHEBI:30616"/>
    </ligand>
</feature>
<comment type="function">
    <text evidence="1">The UvrABC repair system catalyzes the recognition and processing of DNA lesions. A damage recognition complex composed of 2 UvrA and 2 UvrB subunits scans DNA for abnormalities. Upon binding of the UvrA(2)B(2) complex to a putative damaged site, the DNA wraps around one UvrB monomer. DNA wrap is dependent on ATP binding by UvrB and probably causes local melting of the DNA helix, facilitating insertion of UvrB beta-hairpin between the DNA strands. Then UvrB probes one DNA strand for the presence of a lesion. If a lesion is found the UvrA subunits dissociate and the UvrB-DNA preincision complex is formed. This complex is subsequently bound by UvrC and the second UvrB is released. If no lesion is found, the DNA wraps around the other UvrB subunit that will check the other stand for damage.</text>
</comment>
<comment type="subunit">
    <text evidence="1">Forms a heterotetramer with UvrA during the search for lesions. Interacts with UvrC in an incision complex.</text>
</comment>
<comment type="subcellular location">
    <subcellularLocation>
        <location evidence="1">Cytoplasm</location>
    </subcellularLocation>
</comment>
<comment type="domain">
    <text evidence="1">The beta-hairpin motif is involved in DNA binding.</text>
</comment>
<comment type="similarity">
    <text evidence="1">Belongs to the UvrB family.</text>
</comment>
<name>UVRB_THEFY</name>
<dbReference type="EMBL" id="CP000088">
    <property type="protein sequence ID" value="AAZ55234.1"/>
    <property type="molecule type" value="Genomic_DNA"/>
</dbReference>
<dbReference type="RefSeq" id="WP_011291643.1">
    <property type="nucleotide sequence ID" value="NC_007333.1"/>
</dbReference>
<dbReference type="SMR" id="Q47QN5"/>
<dbReference type="STRING" id="269800.Tfu_1196"/>
<dbReference type="KEGG" id="tfu:Tfu_1196"/>
<dbReference type="eggNOG" id="COG0556">
    <property type="taxonomic scope" value="Bacteria"/>
</dbReference>
<dbReference type="HOGENOM" id="CLU_009621_2_1_11"/>
<dbReference type="OrthoDB" id="9806651at2"/>
<dbReference type="GO" id="GO:0005737">
    <property type="term" value="C:cytoplasm"/>
    <property type="evidence" value="ECO:0007669"/>
    <property type="project" value="UniProtKB-SubCell"/>
</dbReference>
<dbReference type="GO" id="GO:0009380">
    <property type="term" value="C:excinuclease repair complex"/>
    <property type="evidence" value="ECO:0007669"/>
    <property type="project" value="InterPro"/>
</dbReference>
<dbReference type="GO" id="GO:0005524">
    <property type="term" value="F:ATP binding"/>
    <property type="evidence" value="ECO:0007669"/>
    <property type="project" value="UniProtKB-UniRule"/>
</dbReference>
<dbReference type="GO" id="GO:0016887">
    <property type="term" value="F:ATP hydrolysis activity"/>
    <property type="evidence" value="ECO:0007669"/>
    <property type="project" value="InterPro"/>
</dbReference>
<dbReference type="GO" id="GO:0003677">
    <property type="term" value="F:DNA binding"/>
    <property type="evidence" value="ECO:0007669"/>
    <property type="project" value="UniProtKB-UniRule"/>
</dbReference>
<dbReference type="GO" id="GO:0009381">
    <property type="term" value="F:excinuclease ABC activity"/>
    <property type="evidence" value="ECO:0007669"/>
    <property type="project" value="UniProtKB-UniRule"/>
</dbReference>
<dbReference type="GO" id="GO:0006289">
    <property type="term" value="P:nucleotide-excision repair"/>
    <property type="evidence" value="ECO:0007669"/>
    <property type="project" value="UniProtKB-UniRule"/>
</dbReference>
<dbReference type="GO" id="GO:0009432">
    <property type="term" value="P:SOS response"/>
    <property type="evidence" value="ECO:0007669"/>
    <property type="project" value="UniProtKB-UniRule"/>
</dbReference>
<dbReference type="CDD" id="cd17916">
    <property type="entry name" value="DEXHc_UvrB"/>
    <property type="match status" value="1"/>
</dbReference>
<dbReference type="CDD" id="cd18790">
    <property type="entry name" value="SF2_C_UvrB"/>
    <property type="match status" value="1"/>
</dbReference>
<dbReference type="FunFam" id="3.40.50.300:FF:000477">
    <property type="entry name" value="UvrABC system protein B"/>
    <property type="match status" value="1"/>
</dbReference>
<dbReference type="FunFam" id="4.10.860.10:FF:000009">
    <property type="entry name" value="UvrABC system protein B"/>
    <property type="match status" value="1"/>
</dbReference>
<dbReference type="Gene3D" id="3.40.50.300">
    <property type="entry name" value="P-loop containing nucleotide triphosphate hydrolases"/>
    <property type="match status" value="3"/>
</dbReference>
<dbReference type="Gene3D" id="4.10.860.10">
    <property type="entry name" value="UVR domain"/>
    <property type="match status" value="1"/>
</dbReference>
<dbReference type="HAMAP" id="MF_00204">
    <property type="entry name" value="UvrB"/>
    <property type="match status" value="1"/>
</dbReference>
<dbReference type="InterPro" id="IPR006935">
    <property type="entry name" value="Helicase/UvrB_N"/>
</dbReference>
<dbReference type="InterPro" id="IPR014001">
    <property type="entry name" value="Helicase_ATP-bd"/>
</dbReference>
<dbReference type="InterPro" id="IPR001650">
    <property type="entry name" value="Helicase_C-like"/>
</dbReference>
<dbReference type="InterPro" id="IPR027417">
    <property type="entry name" value="P-loop_NTPase"/>
</dbReference>
<dbReference type="InterPro" id="IPR001943">
    <property type="entry name" value="UVR_dom"/>
</dbReference>
<dbReference type="InterPro" id="IPR036876">
    <property type="entry name" value="UVR_dom_sf"/>
</dbReference>
<dbReference type="InterPro" id="IPR004807">
    <property type="entry name" value="UvrB"/>
</dbReference>
<dbReference type="InterPro" id="IPR041471">
    <property type="entry name" value="UvrB_inter"/>
</dbReference>
<dbReference type="InterPro" id="IPR024759">
    <property type="entry name" value="UvrB_YAD/RRR_dom"/>
</dbReference>
<dbReference type="NCBIfam" id="NF003673">
    <property type="entry name" value="PRK05298.1"/>
    <property type="match status" value="1"/>
</dbReference>
<dbReference type="NCBIfam" id="TIGR00631">
    <property type="entry name" value="uvrb"/>
    <property type="match status" value="1"/>
</dbReference>
<dbReference type="PANTHER" id="PTHR24029">
    <property type="entry name" value="UVRABC SYSTEM PROTEIN B"/>
    <property type="match status" value="1"/>
</dbReference>
<dbReference type="PANTHER" id="PTHR24029:SF0">
    <property type="entry name" value="UVRABC SYSTEM PROTEIN B"/>
    <property type="match status" value="1"/>
</dbReference>
<dbReference type="Pfam" id="PF00271">
    <property type="entry name" value="Helicase_C"/>
    <property type="match status" value="1"/>
</dbReference>
<dbReference type="Pfam" id="PF04851">
    <property type="entry name" value="ResIII"/>
    <property type="match status" value="1"/>
</dbReference>
<dbReference type="Pfam" id="PF02151">
    <property type="entry name" value="UVR"/>
    <property type="match status" value="1"/>
</dbReference>
<dbReference type="Pfam" id="PF12344">
    <property type="entry name" value="UvrB"/>
    <property type="match status" value="1"/>
</dbReference>
<dbReference type="Pfam" id="PF17757">
    <property type="entry name" value="UvrB_inter"/>
    <property type="match status" value="1"/>
</dbReference>
<dbReference type="SMART" id="SM00487">
    <property type="entry name" value="DEXDc"/>
    <property type="match status" value="1"/>
</dbReference>
<dbReference type="SMART" id="SM00490">
    <property type="entry name" value="HELICc"/>
    <property type="match status" value="1"/>
</dbReference>
<dbReference type="SUPFAM" id="SSF46600">
    <property type="entry name" value="C-terminal UvrC-binding domain of UvrB"/>
    <property type="match status" value="1"/>
</dbReference>
<dbReference type="SUPFAM" id="SSF52540">
    <property type="entry name" value="P-loop containing nucleoside triphosphate hydrolases"/>
    <property type="match status" value="2"/>
</dbReference>
<dbReference type="PROSITE" id="PS51192">
    <property type="entry name" value="HELICASE_ATP_BIND_1"/>
    <property type="match status" value="1"/>
</dbReference>
<dbReference type="PROSITE" id="PS51194">
    <property type="entry name" value="HELICASE_CTER"/>
    <property type="match status" value="1"/>
</dbReference>
<dbReference type="PROSITE" id="PS50151">
    <property type="entry name" value="UVR"/>
    <property type="match status" value="1"/>
</dbReference>
<reference key="1">
    <citation type="journal article" date="2007" name="J. Bacteriol.">
        <title>Genome sequence and analysis of the soil cellulolytic actinomycete Thermobifida fusca YX.</title>
        <authorList>
            <person name="Lykidis A."/>
            <person name="Mavromatis K."/>
            <person name="Ivanova N."/>
            <person name="Anderson I."/>
            <person name="Land M."/>
            <person name="DiBartolo G."/>
            <person name="Martinez M."/>
            <person name="Lapidus A."/>
            <person name="Lucas S."/>
            <person name="Copeland A."/>
            <person name="Richardson P."/>
            <person name="Wilson D.B."/>
            <person name="Kyrpides N."/>
        </authorList>
    </citation>
    <scope>NUCLEOTIDE SEQUENCE [LARGE SCALE GENOMIC DNA]</scope>
    <source>
        <strain>YX</strain>
    </source>
</reference>
<evidence type="ECO:0000255" key="1">
    <source>
        <dbReference type="HAMAP-Rule" id="MF_00204"/>
    </source>
</evidence>
<evidence type="ECO:0000256" key="2">
    <source>
        <dbReference type="SAM" id="MobiDB-lite"/>
    </source>
</evidence>
<proteinExistence type="inferred from homology"/>
<organism>
    <name type="scientific">Thermobifida fusca (strain YX)</name>
    <dbReference type="NCBI Taxonomy" id="269800"/>
    <lineage>
        <taxon>Bacteria</taxon>
        <taxon>Bacillati</taxon>
        <taxon>Actinomycetota</taxon>
        <taxon>Actinomycetes</taxon>
        <taxon>Streptosporangiales</taxon>
        <taxon>Nocardiopsidaceae</taxon>
        <taxon>Thermobifida</taxon>
    </lineage>
</organism>
<protein>
    <recommendedName>
        <fullName evidence="1">UvrABC system protein B</fullName>
        <shortName evidence="1">Protein UvrB</shortName>
    </recommendedName>
    <alternativeName>
        <fullName evidence="1">Excinuclease ABC subunit B</fullName>
    </alternativeName>
</protein>
<gene>
    <name evidence="1" type="primary">uvrB</name>
    <name type="ordered locus">Tfu_1196</name>
</gene>
<sequence>MRPVTDIQRTDRPFEVVTDMVPAGDQPAAIEELARRIQGGAADTVLLGATGTGKTATVAWLIERLQRPTLVIQPNKTLAAQFANELREMMPHNAVEYFVSYYDYYQPEAYVPQTDTYIEKDSSINEEVERLRHSATTALLTRRDTVVVASVSCIYGLGTPQEYVDRMATVEVGMEIDRDELLRRLVEMQYTRNDVAFTRGTFRVRGDTVEIIPVYDELAVRIEMFGDEIERLMTLHPITGEVLGESDRVYIFPASHYVAGPERMRKAIAGIQAELEERLAELEAAGKLLEAQRLRMRTTYDVEMLEQMGTCAGVENYSRHFDGRAPGSPPNTLLDYFPEDFLVVIDESHVTVPQIGGMYEGDAARKRTLVEHGFRLPSAMDNRPLTWDEFRERTGQTLYLSATPGPYELERVGGDVVEQVIRPTGLVDPEVIVKPTEGQIDDLVHEIRIRAERDERVLVTTLTKKMAEDLTDYLTDLGIRVRYLHSEIDTLRRVELLRELRVGVFDVLVGINLLREGLDLPEVSLVAILDADKEGFLRSERSLIQTIGRAARHVSGQVHMYADTVTDAMAAAIEETNRRRAKQLAYNAEHGIDPKPLRKKIADILDSLAREDADTAELLARSRGEKRGTPTPRSGALSGPDRVAEQAKNLPREELAALVEQLTEQMHQAAADLQFELAARLRDEIKELKRELRGMEEAGIG</sequence>